<sequence>MTTETFDGVRLTTKANVYFDGKCVSHSFTLPDGTKKSVGVVLPATLTFGTAAAEIMECVGGSCEYKLDGTDEWKTSGAGDSFQVPANSKFDIRVTEAYHYICHYA</sequence>
<comment type="function">
    <text evidence="1">Catalyzes the phosphorolysis of diverse nucleosides, yielding D-ribose 1-phosphate and the respective free bases. Can use uridine, adenosine, guanosine, cytidine, thymidine, inosine and xanthosine as substrates. Also catalyzes the reverse reactions.</text>
</comment>
<comment type="catalytic activity">
    <reaction evidence="1">
        <text>a purine D-ribonucleoside + phosphate = a purine nucleobase + alpha-D-ribose 1-phosphate</text>
        <dbReference type="Rhea" id="RHEA:19805"/>
        <dbReference type="ChEBI" id="CHEBI:26386"/>
        <dbReference type="ChEBI" id="CHEBI:43474"/>
        <dbReference type="ChEBI" id="CHEBI:57720"/>
        <dbReference type="ChEBI" id="CHEBI:142355"/>
        <dbReference type="EC" id="2.4.2.1"/>
    </reaction>
</comment>
<comment type="catalytic activity">
    <reaction evidence="1">
        <text>adenosine + phosphate = alpha-D-ribose 1-phosphate + adenine</text>
        <dbReference type="Rhea" id="RHEA:27642"/>
        <dbReference type="ChEBI" id="CHEBI:16335"/>
        <dbReference type="ChEBI" id="CHEBI:16708"/>
        <dbReference type="ChEBI" id="CHEBI:43474"/>
        <dbReference type="ChEBI" id="CHEBI:57720"/>
        <dbReference type="EC" id="2.4.2.1"/>
    </reaction>
</comment>
<comment type="catalytic activity">
    <reaction evidence="1">
        <text>cytidine + phosphate = cytosine + alpha-D-ribose 1-phosphate</text>
        <dbReference type="Rhea" id="RHEA:52540"/>
        <dbReference type="ChEBI" id="CHEBI:16040"/>
        <dbReference type="ChEBI" id="CHEBI:17562"/>
        <dbReference type="ChEBI" id="CHEBI:43474"/>
        <dbReference type="ChEBI" id="CHEBI:57720"/>
        <dbReference type="EC" id="2.4.2.2"/>
    </reaction>
</comment>
<comment type="catalytic activity">
    <reaction evidence="1">
        <text>guanosine + phosphate = alpha-D-ribose 1-phosphate + guanine</text>
        <dbReference type="Rhea" id="RHEA:13233"/>
        <dbReference type="ChEBI" id="CHEBI:16235"/>
        <dbReference type="ChEBI" id="CHEBI:16750"/>
        <dbReference type="ChEBI" id="CHEBI:43474"/>
        <dbReference type="ChEBI" id="CHEBI:57720"/>
        <dbReference type="EC" id="2.4.2.1"/>
    </reaction>
</comment>
<comment type="catalytic activity">
    <reaction evidence="1">
        <text>inosine + phosphate = alpha-D-ribose 1-phosphate + hypoxanthine</text>
        <dbReference type="Rhea" id="RHEA:27646"/>
        <dbReference type="ChEBI" id="CHEBI:17368"/>
        <dbReference type="ChEBI" id="CHEBI:17596"/>
        <dbReference type="ChEBI" id="CHEBI:43474"/>
        <dbReference type="ChEBI" id="CHEBI:57720"/>
        <dbReference type="EC" id="2.4.2.1"/>
    </reaction>
</comment>
<comment type="catalytic activity">
    <reaction evidence="1">
        <text>thymidine + phosphate = 2-deoxy-alpha-D-ribose 1-phosphate + thymine</text>
        <dbReference type="Rhea" id="RHEA:16037"/>
        <dbReference type="ChEBI" id="CHEBI:17748"/>
        <dbReference type="ChEBI" id="CHEBI:17821"/>
        <dbReference type="ChEBI" id="CHEBI:43474"/>
        <dbReference type="ChEBI" id="CHEBI:57259"/>
        <dbReference type="EC" id="2.4.2.2"/>
    </reaction>
</comment>
<comment type="catalytic activity">
    <reaction evidence="1">
        <text>uridine + phosphate = alpha-D-ribose 1-phosphate + uracil</text>
        <dbReference type="Rhea" id="RHEA:24388"/>
        <dbReference type="ChEBI" id="CHEBI:16704"/>
        <dbReference type="ChEBI" id="CHEBI:17568"/>
        <dbReference type="ChEBI" id="CHEBI:43474"/>
        <dbReference type="ChEBI" id="CHEBI:57720"/>
        <dbReference type="EC" id="2.4.2.2"/>
    </reaction>
</comment>
<comment type="catalytic activity">
    <reaction evidence="1">
        <text>xanthosine + phosphate = alpha-D-ribose 1-phosphate + xanthine</text>
        <dbReference type="Rhea" id="RHEA:27638"/>
        <dbReference type="ChEBI" id="CHEBI:17712"/>
        <dbReference type="ChEBI" id="CHEBI:18107"/>
        <dbReference type="ChEBI" id="CHEBI:43474"/>
        <dbReference type="ChEBI" id="CHEBI:57720"/>
        <dbReference type="EC" id="2.4.2.1"/>
    </reaction>
</comment>
<comment type="similarity">
    <text evidence="1">Belongs to the nucleoside phosphorylase PpnP family.</text>
</comment>
<gene>
    <name evidence="1" type="primary">ppnP</name>
    <name type="ordered locus">Rpic_2828</name>
</gene>
<dbReference type="EC" id="2.4.2.1" evidence="1"/>
<dbReference type="EC" id="2.4.2.2" evidence="1"/>
<dbReference type="EMBL" id="CP001068">
    <property type="protein sequence ID" value="ACD27951.1"/>
    <property type="molecule type" value="Genomic_DNA"/>
</dbReference>
<dbReference type="SMR" id="B2UBA2"/>
<dbReference type="STRING" id="402626.Rpic_2828"/>
<dbReference type="KEGG" id="rpi:Rpic_2828"/>
<dbReference type="eggNOG" id="COG3123">
    <property type="taxonomic scope" value="Bacteria"/>
</dbReference>
<dbReference type="HOGENOM" id="CLU_157874_1_0_4"/>
<dbReference type="GO" id="GO:0005829">
    <property type="term" value="C:cytosol"/>
    <property type="evidence" value="ECO:0007669"/>
    <property type="project" value="TreeGrafter"/>
</dbReference>
<dbReference type="GO" id="GO:0047975">
    <property type="term" value="F:guanosine phosphorylase activity"/>
    <property type="evidence" value="ECO:0007669"/>
    <property type="project" value="UniProtKB-EC"/>
</dbReference>
<dbReference type="GO" id="GO:0004731">
    <property type="term" value="F:purine-nucleoside phosphorylase activity"/>
    <property type="evidence" value="ECO:0007669"/>
    <property type="project" value="UniProtKB-UniRule"/>
</dbReference>
<dbReference type="GO" id="GO:0009032">
    <property type="term" value="F:thymidine phosphorylase activity"/>
    <property type="evidence" value="ECO:0007669"/>
    <property type="project" value="UniProtKB-EC"/>
</dbReference>
<dbReference type="GO" id="GO:0004850">
    <property type="term" value="F:uridine phosphorylase activity"/>
    <property type="evidence" value="ECO:0007669"/>
    <property type="project" value="UniProtKB-EC"/>
</dbReference>
<dbReference type="CDD" id="cd20296">
    <property type="entry name" value="cupin_PpnP-like"/>
    <property type="match status" value="1"/>
</dbReference>
<dbReference type="Gene3D" id="2.60.120.10">
    <property type="entry name" value="Jelly Rolls"/>
    <property type="match status" value="1"/>
</dbReference>
<dbReference type="HAMAP" id="MF_01537">
    <property type="entry name" value="Nucleos_phosphorylase_PpnP"/>
    <property type="match status" value="1"/>
</dbReference>
<dbReference type="InterPro" id="IPR009664">
    <property type="entry name" value="Ppnp"/>
</dbReference>
<dbReference type="InterPro" id="IPR014710">
    <property type="entry name" value="RmlC-like_jellyroll"/>
</dbReference>
<dbReference type="InterPro" id="IPR011051">
    <property type="entry name" value="RmlC_Cupin_sf"/>
</dbReference>
<dbReference type="PANTHER" id="PTHR36540">
    <property type="entry name" value="PYRIMIDINE/PURINE NUCLEOSIDE PHOSPHORYLASE"/>
    <property type="match status" value="1"/>
</dbReference>
<dbReference type="PANTHER" id="PTHR36540:SF1">
    <property type="entry name" value="PYRIMIDINE_PURINE NUCLEOSIDE PHOSPHORYLASE"/>
    <property type="match status" value="1"/>
</dbReference>
<dbReference type="Pfam" id="PF06865">
    <property type="entry name" value="Ppnp"/>
    <property type="match status" value="1"/>
</dbReference>
<dbReference type="SUPFAM" id="SSF51182">
    <property type="entry name" value="RmlC-like cupins"/>
    <property type="match status" value="1"/>
</dbReference>
<feature type="chain" id="PRO_1000198672" description="Pyrimidine/purine nucleoside phosphorylase">
    <location>
        <begin position="1"/>
        <end position="105"/>
    </location>
</feature>
<organism>
    <name type="scientific">Ralstonia pickettii (strain 12J)</name>
    <dbReference type="NCBI Taxonomy" id="402626"/>
    <lineage>
        <taxon>Bacteria</taxon>
        <taxon>Pseudomonadati</taxon>
        <taxon>Pseudomonadota</taxon>
        <taxon>Betaproteobacteria</taxon>
        <taxon>Burkholderiales</taxon>
        <taxon>Burkholderiaceae</taxon>
        <taxon>Ralstonia</taxon>
    </lineage>
</organism>
<proteinExistence type="inferred from homology"/>
<accession>B2UBA2</accession>
<keyword id="KW-0328">Glycosyltransferase</keyword>
<keyword id="KW-0808">Transferase</keyword>
<reference key="1">
    <citation type="submission" date="2008-05" db="EMBL/GenBank/DDBJ databases">
        <title>Complete sequence of chromosome 1 of Ralstonia pickettii 12J.</title>
        <authorList>
            <person name="Lucas S."/>
            <person name="Copeland A."/>
            <person name="Lapidus A."/>
            <person name="Glavina del Rio T."/>
            <person name="Dalin E."/>
            <person name="Tice H."/>
            <person name="Bruce D."/>
            <person name="Goodwin L."/>
            <person name="Pitluck S."/>
            <person name="Meincke L."/>
            <person name="Brettin T."/>
            <person name="Detter J.C."/>
            <person name="Han C."/>
            <person name="Kuske C.R."/>
            <person name="Schmutz J."/>
            <person name="Larimer F."/>
            <person name="Land M."/>
            <person name="Hauser L."/>
            <person name="Kyrpides N."/>
            <person name="Mikhailova N."/>
            <person name="Marsh T."/>
            <person name="Richardson P."/>
        </authorList>
    </citation>
    <scope>NUCLEOTIDE SEQUENCE [LARGE SCALE GENOMIC DNA]</scope>
    <source>
        <strain>12J</strain>
    </source>
</reference>
<evidence type="ECO:0000255" key="1">
    <source>
        <dbReference type="HAMAP-Rule" id="MF_01537"/>
    </source>
</evidence>
<name>PPNP_RALPJ</name>
<protein>
    <recommendedName>
        <fullName evidence="1">Pyrimidine/purine nucleoside phosphorylase</fullName>
        <ecNumber evidence="1">2.4.2.1</ecNumber>
        <ecNumber evidence="1">2.4.2.2</ecNumber>
    </recommendedName>
    <alternativeName>
        <fullName evidence="1">Adenosine phosphorylase</fullName>
    </alternativeName>
    <alternativeName>
        <fullName evidence="1">Cytidine phosphorylase</fullName>
    </alternativeName>
    <alternativeName>
        <fullName evidence="1">Guanosine phosphorylase</fullName>
    </alternativeName>
    <alternativeName>
        <fullName evidence="1">Inosine phosphorylase</fullName>
    </alternativeName>
    <alternativeName>
        <fullName evidence="1">Thymidine phosphorylase</fullName>
    </alternativeName>
    <alternativeName>
        <fullName evidence="1">Uridine phosphorylase</fullName>
    </alternativeName>
    <alternativeName>
        <fullName evidence="1">Xanthosine phosphorylase</fullName>
    </alternativeName>
</protein>